<name>ERBB2_MESAU</name>
<gene>
    <name type="primary">ERBB2</name>
    <name type="synonym">NEU</name>
</gene>
<comment type="function">
    <text evidence="1">Protein tyrosine kinase that is part of several cell surface receptor complexes, but that apparently needs a coreceptor for ligand binding. Essential component of a neuregulin-receptor complex, although neuregulins do not interact with it alone. GP30 is a potential ligand for this receptor. Regulates outgrowth and stabilization of peripheral microtubules (MTs). Upon ERBB2 activation, the MEMO1-RHOA-DIAPH1 signaling pathway elicits the phosphorylation and thus the inhibition of GSK3B at cell membrane. This prevents the phosphorylation of APC and CLASP2, allowing its association with the cell membrane. In turn, membrane-bound APC allows the localization of MACF1 to the cell membrane, which is required for microtubule capture and stabilization (By similarity).</text>
</comment>
<comment type="function">
    <text evidence="1">In the nucleus is involved in transcriptional regulation. Associates with the 5'-TCAAATTC-3' sequence in the PTGS2/COX-2 promoter and activates its transcription. Implicated in transcriptional activation of CDKN1A; the function involves STAT3 and SRC. Involved in the transcription of rRNA genes by RNA Pol I and enhances protein synthesis and cell growth (By similarity).</text>
</comment>
<comment type="catalytic activity">
    <reaction evidence="7">
        <text>L-tyrosyl-[protein] + ATP = O-phospho-L-tyrosyl-[protein] + ADP + H(+)</text>
        <dbReference type="Rhea" id="RHEA:10596"/>
        <dbReference type="Rhea" id="RHEA-COMP:10136"/>
        <dbReference type="Rhea" id="RHEA-COMP:20101"/>
        <dbReference type="ChEBI" id="CHEBI:15378"/>
        <dbReference type="ChEBI" id="CHEBI:30616"/>
        <dbReference type="ChEBI" id="CHEBI:46858"/>
        <dbReference type="ChEBI" id="CHEBI:61978"/>
        <dbReference type="ChEBI" id="CHEBI:456216"/>
        <dbReference type="EC" id="2.7.10.1"/>
    </reaction>
</comment>
<comment type="subunit">
    <text evidence="2 4">Homodimer. Heterodimer with EGFR, ERBB3 and ERBB4. Part of a complex with EGFR and either PIK3C2A or PIK3C2B. May interact with PIK3C2B when phosphorylated on Tyr-1196. Interacts with PRKCABP and PLXNB1. Interacts (when phosphorylated on Tyr-1247) with MEMO. Interacts with MUC1. Interacts (when phosphorylated on Tyr-1139) with GRB7 (via SH2 domain). Interacts (when phosphorylated on Tyr-1247) with ERBIN. Interacts with SRC, KPNB1, RANBP2, EEA1, CRM1, CLTC, PTK6, RPA194, MYOC and ACTB. Interacts (preferentially with the tyrosine phosphorylated form) with CPNE3; this interaction occurs at the cell membrane and is increased in a growth factor heregulin-dependent manner. Interacts with HSP90AA1 and HSP90AB1 in an ATP-dependent manner; the interaction suppresses ERBB2 kinase activity (By similarity). Interacts with SORL1; this interaction regulates ERBB2 subcellular distribution by promoting its recycling after internalization from endosomes back to the plasma membrane, hence stimulates ERBB2-mediated signaling (By similarity). Interacts with SH3BGRL (By similarity). Interacts with ROR1 (By similarity).</text>
</comment>
<comment type="subcellular location">
    <subcellularLocation>
        <location evidence="2">Cell membrane</location>
        <topology evidence="2">Single-pass type I membrane protein</topology>
    </subcellularLocation>
    <subcellularLocation>
        <location evidence="2">Cell projection</location>
        <location evidence="2">Ruffle membrane</location>
        <topology evidence="2">Single-pass type I membrane protein</topology>
    </subcellularLocation>
    <subcellularLocation>
        <location evidence="2">Early endosome</location>
    </subcellularLocation>
    <subcellularLocation>
        <location evidence="2">Cytoplasm</location>
        <location evidence="2">Perinuclear region</location>
    </subcellularLocation>
    <subcellularLocation>
        <location evidence="2">Nucleus</location>
    </subcellularLocation>
    <text evidence="2">Translocation to the nucleus requires endocytosis, probably endosomal sorting and is mediated by importin beta-1/KPNB1. Also detected in endosome-to-TGN retrograde vesicles. Internalized from the cell membrane in response to EGF stimulation.</text>
</comment>
<comment type="PTM">
    <text evidence="2">Autophosphorylated. Autophosphorylation occurs in trans, i.e. one subunit of the dimeric receptor phosphorylates tyrosine residues on the other subunit. Ligand-binding increases phosphorylation on tyrosine residues. Signaling via SEMA4C promotes phosphorylation at Tyr-1247. Dephosphorylated by PTPN12.</text>
</comment>
<comment type="similarity">
    <text evidence="6">Belongs to the protein kinase superfamily. Tyr protein kinase family. EGF receptor subfamily.</text>
</comment>
<evidence type="ECO:0000250" key="1"/>
<evidence type="ECO:0000250" key="2">
    <source>
        <dbReference type="UniProtKB" id="P04626"/>
    </source>
</evidence>
<evidence type="ECO:0000250" key="3">
    <source>
        <dbReference type="UniProtKB" id="P06494"/>
    </source>
</evidence>
<evidence type="ECO:0000250" key="4">
    <source>
        <dbReference type="UniProtKB" id="P70424"/>
    </source>
</evidence>
<evidence type="ECO:0000255" key="5"/>
<evidence type="ECO:0000255" key="6">
    <source>
        <dbReference type="PROSITE-ProRule" id="PRU00159"/>
    </source>
</evidence>
<evidence type="ECO:0000255" key="7">
    <source>
        <dbReference type="PROSITE-ProRule" id="PRU10028"/>
    </source>
</evidence>
<evidence type="ECO:0000256" key="8">
    <source>
        <dbReference type="SAM" id="MobiDB-lite"/>
    </source>
</evidence>
<evidence type="ECO:0000269" key="9">
    <source>
    </source>
</evidence>
<accession>Q60553</accession>
<keyword id="KW-0010">Activator</keyword>
<keyword id="KW-0067">ATP-binding</keyword>
<keyword id="KW-1003">Cell membrane</keyword>
<keyword id="KW-0966">Cell projection</keyword>
<keyword id="KW-0963">Cytoplasm</keyword>
<keyword id="KW-1015">Disulfide bond</keyword>
<keyword id="KW-0967">Endosome</keyword>
<keyword id="KW-0325">Glycoprotein</keyword>
<keyword id="KW-0418">Kinase</keyword>
<keyword id="KW-0472">Membrane</keyword>
<keyword id="KW-0547">Nucleotide-binding</keyword>
<keyword id="KW-0539">Nucleus</keyword>
<keyword id="KW-0597">Phosphoprotein</keyword>
<keyword id="KW-0656">Proto-oncogene</keyword>
<keyword id="KW-0675">Receptor</keyword>
<keyword id="KW-1185">Reference proteome</keyword>
<keyword id="KW-0732">Signal</keyword>
<keyword id="KW-0804">Transcription</keyword>
<keyword id="KW-0805">Transcription regulation</keyword>
<keyword id="KW-0808">Transferase</keyword>
<keyword id="KW-0812">Transmembrane</keyword>
<keyword id="KW-1133">Transmembrane helix</keyword>
<keyword id="KW-0829">Tyrosine-protein kinase</keyword>
<protein>
    <recommendedName>
        <fullName>Receptor tyrosine-protein kinase erbB-2</fullName>
        <ecNumber>2.7.10.1</ecNumber>
    </recommendedName>
    <alternativeName>
        <fullName>Proto-oncogene Neu</fullName>
    </alternativeName>
    <alternativeName>
        <fullName>Proto-oncogene c-ErbB-2</fullName>
    </alternativeName>
    <alternativeName>
        <fullName>p185erbB2</fullName>
    </alternativeName>
    <cdAntigenName>CD340</cdAntigenName>
</protein>
<proteinExistence type="evidence at transcript level"/>
<feature type="signal peptide" evidence="5">
    <location>
        <begin position="1"/>
        <end position="22"/>
    </location>
</feature>
<feature type="chain" id="PRO_0000016670" description="Receptor tyrosine-protein kinase erbB-2">
    <location>
        <begin position="23"/>
        <end position="1254"/>
    </location>
</feature>
<feature type="topological domain" description="Extracellular" evidence="5">
    <location>
        <begin position="23"/>
        <end position="652"/>
    </location>
</feature>
<feature type="transmembrane region" description="Helical" evidence="5">
    <location>
        <begin position="653"/>
        <end position="675"/>
    </location>
</feature>
<feature type="topological domain" description="Cytoplasmic" evidence="5">
    <location>
        <begin position="676"/>
        <end position="1254"/>
    </location>
</feature>
<feature type="domain" description="Protein kinase" evidence="6">
    <location>
        <begin position="720"/>
        <end position="987"/>
    </location>
</feature>
<feature type="region of interest" description="Required for interaction with KPNB1 and EEA1" evidence="1">
    <location>
        <begin position="676"/>
        <end position="689"/>
    </location>
</feature>
<feature type="region of interest" description="Disordered" evidence="8">
    <location>
        <begin position="1029"/>
        <end position="1116"/>
    </location>
</feature>
<feature type="region of interest" description="Disordered" evidence="8">
    <location>
        <begin position="1133"/>
        <end position="1179"/>
    </location>
</feature>
<feature type="region of interest" description="Interaction with PIK3C2B" evidence="1">
    <location>
        <begin position="1195"/>
        <end position="1197"/>
    </location>
</feature>
<feature type="region of interest" description="Disordered" evidence="8">
    <location>
        <begin position="1223"/>
        <end position="1254"/>
    </location>
</feature>
<feature type="short sequence motif" description="Nuclear localization signal" evidence="1">
    <location>
        <begin position="676"/>
        <end position="689"/>
    </location>
</feature>
<feature type="compositionally biased region" description="Pro residues" evidence="8">
    <location>
        <begin position="1146"/>
        <end position="1161"/>
    </location>
</feature>
<feature type="compositionally biased region" description="Polar residues" evidence="8">
    <location>
        <begin position="1232"/>
        <end position="1242"/>
    </location>
</feature>
<feature type="active site" description="Proton acceptor" evidence="6 7">
    <location>
        <position position="845"/>
    </location>
</feature>
<feature type="binding site" evidence="6">
    <location>
        <begin position="726"/>
        <end position="734"/>
    </location>
    <ligand>
        <name>ATP</name>
        <dbReference type="ChEBI" id="CHEBI:30616"/>
    </ligand>
</feature>
<feature type="binding site" evidence="6">
    <location>
        <position position="753"/>
    </location>
    <ligand>
        <name>ATP</name>
        <dbReference type="ChEBI" id="CHEBI:30616"/>
    </ligand>
</feature>
<feature type="modified residue" description="Phosphotyrosine" evidence="2">
    <location>
        <position position="877"/>
    </location>
</feature>
<feature type="modified residue" description="Phosphoserine" evidence="2">
    <location>
        <position position="1054"/>
    </location>
</feature>
<feature type="modified residue" description="Phosphoserine" evidence="3">
    <location>
        <position position="1078"/>
    </location>
</feature>
<feature type="modified residue" description="Phosphoserine" evidence="2">
    <location>
        <position position="1083"/>
    </location>
</feature>
<feature type="modified residue" description="Phosphoserine" evidence="2">
    <location>
        <position position="1107"/>
    </location>
</feature>
<feature type="modified residue" description="Phosphotyrosine" evidence="2">
    <location>
        <position position="1112"/>
    </location>
</feature>
<feature type="modified residue" description="Phosphotyrosine; by autocatalysis" evidence="2">
    <location>
        <position position="1139"/>
    </location>
</feature>
<feature type="modified residue" description="Phosphothreonine" evidence="2">
    <location>
        <position position="1166"/>
    </location>
</feature>
<feature type="modified residue" description="Phosphotyrosine" evidence="2">
    <location>
        <position position="1196"/>
    </location>
</feature>
<feature type="modified residue" description="Phosphotyrosine; by autocatalysis" evidence="2">
    <location>
        <position position="1247"/>
    </location>
</feature>
<feature type="glycosylation site" description="N-linked (GlcNAc...) asparagine" evidence="5">
    <location>
        <position position="68"/>
    </location>
</feature>
<feature type="glycosylation site" description="N-linked (GlcNAc...) asparagine" evidence="5">
    <location>
        <position position="125"/>
    </location>
</feature>
<feature type="glycosylation site" description="N-linked (GlcNAc...) asparagine" evidence="5">
    <location>
        <position position="187"/>
    </location>
</feature>
<feature type="glycosylation site" description="N-linked (GlcNAc...) asparagine" evidence="5">
    <location>
        <position position="259"/>
    </location>
</feature>
<feature type="glycosylation site" description="N-linked (GlcNAc...) asparagine" evidence="5">
    <location>
        <position position="530"/>
    </location>
</feature>
<feature type="glycosylation site" description="N-linked (GlcNAc...) asparagine" evidence="5">
    <location>
        <position position="571"/>
    </location>
</feature>
<feature type="glycosylation site" description="N-linked (GlcNAc...) asparagine" evidence="5">
    <location>
        <position position="629"/>
    </location>
</feature>
<feature type="disulfide bond" evidence="2">
    <location>
        <begin position="26"/>
        <end position="53"/>
    </location>
</feature>
<feature type="disulfide bond" evidence="2">
    <location>
        <begin position="162"/>
        <end position="192"/>
    </location>
</feature>
<feature type="disulfide bond" evidence="2">
    <location>
        <begin position="195"/>
        <end position="204"/>
    </location>
</feature>
<feature type="disulfide bond" evidence="2">
    <location>
        <begin position="199"/>
        <end position="212"/>
    </location>
</feature>
<feature type="disulfide bond" evidence="2">
    <location>
        <begin position="236"/>
        <end position="244"/>
    </location>
</feature>
<feature type="disulfide bond" evidence="2">
    <location>
        <begin position="240"/>
        <end position="252"/>
    </location>
</feature>
<feature type="disulfide bond" evidence="2">
    <location>
        <begin position="255"/>
        <end position="264"/>
    </location>
</feature>
<feature type="disulfide bond" evidence="2">
    <location>
        <begin position="268"/>
        <end position="295"/>
    </location>
</feature>
<feature type="disulfide bond" evidence="2">
    <location>
        <begin position="299"/>
        <end position="311"/>
    </location>
</feature>
<feature type="disulfide bond" evidence="2">
    <location>
        <begin position="315"/>
        <end position="331"/>
    </location>
</feature>
<feature type="disulfide bond" evidence="2">
    <location>
        <begin position="334"/>
        <end position="338"/>
    </location>
</feature>
<feature type="disulfide bond" evidence="2">
    <location>
        <begin position="342"/>
        <end position="367"/>
    </location>
</feature>
<feature type="disulfide bond" evidence="2">
    <location>
        <begin position="475"/>
        <end position="504"/>
    </location>
</feature>
<feature type="disulfide bond" evidence="2">
    <location>
        <begin position="511"/>
        <end position="520"/>
    </location>
</feature>
<feature type="disulfide bond" evidence="2">
    <location>
        <begin position="515"/>
        <end position="528"/>
    </location>
</feature>
<feature type="disulfide bond" evidence="2">
    <location>
        <begin position="531"/>
        <end position="540"/>
    </location>
</feature>
<feature type="disulfide bond" evidence="2">
    <location>
        <begin position="544"/>
        <end position="560"/>
    </location>
</feature>
<feature type="disulfide bond" evidence="2">
    <location>
        <begin position="563"/>
        <end position="576"/>
    </location>
</feature>
<feature type="disulfide bond" evidence="2">
    <location>
        <begin position="567"/>
        <end position="584"/>
    </location>
</feature>
<feature type="disulfide bond" evidence="2">
    <location>
        <begin position="587"/>
        <end position="596"/>
    </location>
</feature>
<feature type="disulfide bond" evidence="2">
    <location>
        <begin position="600"/>
        <end position="623"/>
    </location>
</feature>
<feature type="disulfide bond" evidence="2">
    <location>
        <begin position="626"/>
        <end position="634"/>
    </location>
</feature>
<feature type="disulfide bond" evidence="2">
    <location>
        <begin position="630"/>
        <end position="642"/>
    </location>
</feature>
<feature type="sequence variant" description="In oncogenic NEU." evidence="9">
    <original>V</original>
    <variation>E</variation>
    <location>
        <position position="658"/>
    </location>
</feature>
<feature type="sequence variant" description="In oncogenic NEU." evidence="9">
    <original>V</original>
    <variation>E</variation>
    <location>
        <position position="659"/>
    </location>
</feature>
<organism>
    <name type="scientific">Mesocricetus auratus</name>
    <name type="common">Golden hamster</name>
    <dbReference type="NCBI Taxonomy" id="10036"/>
    <lineage>
        <taxon>Eukaryota</taxon>
        <taxon>Metazoa</taxon>
        <taxon>Chordata</taxon>
        <taxon>Craniata</taxon>
        <taxon>Vertebrata</taxon>
        <taxon>Euteleostomi</taxon>
        <taxon>Mammalia</taxon>
        <taxon>Eutheria</taxon>
        <taxon>Euarchontoglires</taxon>
        <taxon>Glires</taxon>
        <taxon>Rodentia</taxon>
        <taxon>Myomorpha</taxon>
        <taxon>Muroidea</taxon>
        <taxon>Cricetidae</taxon>
        <taxon>Cricetinae</taxon>
        <taxon>Mesocricetus</taxon>
    </lineage>
</organism>
<dbReference type="EC" id="2.7.10.1"/>
<dbReference type="EMBL" id="D16295">
    <property type="protein sequence ID" value="BAA03801.1"/>
    <property type="molecule type" value="mRNA"/>
</dbReference>
<dbReference type="PIR" id="I48161">
    <property type="entry name" value="I48161"/>
</dbReference>
<dbReference type="RefSeq" id="NP_001268310.1">
    <property type="nucleotide sequence ID" value="NM_001281381.1"/>
</dbReference>
<dbReference type="SMR" id="Q60553"/>
<dbReference type="STRING" id="10036.ENSMAUP00000024426"/>
<dbReference type="GlyCosmos" id="Q60553">
    <property type="glycosylation" value="7 sites, No reported glycans"/>
</dbReference>
<dbReference type="GeneID" id="101822760"/>
<dbReference type="KEGG" id="maua:101822760"/>
<dbReference type="CTD" id="2064"/>
<dbReference type="eggNOG" id="KOG1025">
    <property type="taxonomic scope" value="Eukaryota"/>
</dbReference>
<dbReference type="OrthoDB" id="6219513at2759"/>
<dbReference type="BRENDA" id="2.7.10.1">
    <property type="organism ID" value="3239"/>
</dbReference>
<dbReference type="Proteomes" id="UP000189706">
    <property type="component" value="Unplaced"/>
</dbReference>
<dbReference type="GO" id="GO:0009925">
    <property type="term" value="C:basal plasma membrane"/>
    <property type="evidence" value="ECO:0007669"/>
    <property type="project" value="TreeGrafter"/>
</dbReference>
<dbReference type="GO" id="GO:0005769">
    <property type="term" value="C:early endosome"/>
    <property type="evidence" value="ECO:0007669"/>
    <property type="project" value="UniProtKB-SubCell"/>
</dbReference>
<dbReference type="GO" id="GO:0005634">
    <property type="term" value="C:nucleus"/>
    <property type="evidence" value="ECO:0007669"/>
    <property type="project" value="UniProtKB-SubCell"/>
</dbReference>
<dbReference type="GO" id="GO:0048471">
    <property type="term" value="C:perinuclear region of cytoplasm"/>
    <property type="evidence" value="ECO:0007669"/>
    <property type="project" value="UniProtKB-SubCell"/>
</dbReference>
<dbReference type="GO" id="GO:0005886">
    <property type="term" value="C:plasma membrane"/>
    <property type="evidence" value="ECO:0000250"/>
    <property type="project" value="UniProtKB"/>
</dbReference>
<dbReference type="GO" id="GO:0043235">
    <property type="term" value="C:receptor complex"/>
    <property type="evidence" value="ECO:0007669"/>
    <property type="project" value="TreeGrafter"/>
</dbReference>
<dbReference type="GO" id="GO:0032587">
    <property type="term" value="C:ruffle membrane"/>
    <property type="evidence" value="ECO:0007669"/>
    <property type="project" value="UniProtKB-SubCell"/>
</dbReference>
<dbReference type="GO" id="GO:0005524">
    <property type="term" value="F:ATP binding"/>
    <property type="evidence" value="ECO:0007669"/>
    <property type="project" value="UniProtKB-KW"/>
</dbReference>
<dbReference type="GO" id="GO:0001042">
    <property type="term" value="F:RNA polymerase I core binding"/>
    <property type="evidence" value="ECO:0000250"/>
    <property type="project" value="UniProtKB"/>
</dbReference>
<dbReference type="GO" id="GO:0004714">
    <property type="term" value="F:transmembrane receptor protein tyrosine kinase activity"/>
    <property type="evidence" value="ECO:0007669"/>
    <property type="project" value="UniProtKB-EC"/>
</dbReference>
<dbReference type="GO" id="GO:0048513">
    <property type="term" value="P:animal organ development"/>
    <property type="evidence" value="ECO:0007669"/>
    <property type="project" value="UniProtKB-ARBA"/>
</dbReference>
<dbReference type="GO" id="GO:0071364">
    <property type="term" value="P:cellular response to epidermal growth factor stimulus"/>
    <property type="evidence" value="ECO:0000250"/>
    <property type="project" value="UniProtKB"/>
</dbReference>
<dbReference type="GO" id="GO:0071363">
    <property type="term" value="P:cellular response to growth factor stimulus"/>
    <property type="evidence" value="ECO:0000250"/>
    <property type="project" value="UniProtKB"/>
</dbReference>
<dbReference type="GO" id="GO:0038127">
    <property type="term" value="P:ERBB signaling pathway"/>
    <property type="evidence" value="ECO:0007669"/>
    <property type="project" value="UniProtKB-ARBA"/>
</dbReference>
<dbReference type="GO" id="GO:0035556">
    <property type="term" value="P:intracellular signal transduction"/>
    <property type="evidence" value="ECO:0000250"/>
    <property type="project" value="UniProtKB"/>
</dbReference>
<dbReference type="GO" id="GO:0043066">
    <property type="term" value="P:negative regulation of apoptotic process"/>
    <property type="evidence" value="ECO:0007669"/>
    <property type="project" value="TreeGrafter"/>
</dbReference>
<dbReference type="GO" id="GO:0030182">
    <property type="term" value="P:neuron differentiation"/>
    <property type="evidence" value="ECO:0007669"/>
    <property type="project" value="TreeGrafter"/>
</dbReference>
<dbReference type="GO" id="GO:0030307">
    <property type="term" value="P:positive regulation of cell growth"/>
    <property type="evidence" value="ECO:0000250"/>
    <property type="project" value="UniProtKB"/>
</dbReference>
<dbReference type="GO" id="GO:0008284">
    <property type="term" value="P:positive regulation of cell population proliferation"/>
    <property type="evidence" value="ECO:0007669"/>
    <property type="project" value="TreeGrafter"/>
</dbReference>
<dbReference type="GO" id="GO:0043410">
    <property type="term" value="P:positive regulation of MAPK cascade"/>
    <property type="evidence" value="ECO:0007669"/>
    <property type="project" value="TreeGrafter"/>
</dbReference>
<dbReference type="GO" id="GO:0090314">
    <property type="term" value="P:positive regulation of protein targeting to membrane"/>
    <property type="evidence" value="ECO:0000250"/>
    <property type="project" value="UniProtKB"/>
</dbReference>
<dbReference type="GO" id="GO:0045943">
    <property type="term" value="P:positive regulation of transcription by RNA polymerase I"/>
    <property type="evidence" value="ECO:0000250"/>
    <property type="project" value="UniProtKB"/>
</dbReference>
<dbReference type="GO" id="GO:0045727">
    <property type="term" value="P:positive regulation of translation"/>
    <property type="evidence" value="ECO:0000250"/>
    <property type="project" value="UniProtKB"/>
</dbReference>
<dbReference type="GO" id="GO:0070372">
    <property type="term" value="P:regulation of ERK1 and ERK2 cascade"/>
    <property type="evidence" value="ECO:0000250"/>
    <property type="project" value="UniProtKB"/>
</dbReference>
<dbReference type="GO" id="GO:0032886">
    <property type="term" value="P:regulation of microtubule-based process"/>
    <property type="evidence" value="ECO:0000250"/>
    <property type="project" value="UniProtKB"/>
</dbReference>
<dbReference type="CDD" id="cd00064">
    <property type="entry name" value="FU"/>
    <property type="match status" value="3"/>
</dbReference>
<dbReference type="CDD" id="cd05109">
    <property type="entry name" value="PTKc_HER2"/>
    <property type="match status" value="1"/>
</dbReference>
<dbReference type="CDD" id="cd12094">
    <property type="entry name" value="TM_ErbB2"/>
    <property type="match status" value="1"/>
</dbReference>
<dbReference type="FunFam" id="1.20.5.100:FF:000007">
    <property type="entry name" value="Receptor protein-tyrosine kinase"/>
    <property type="match status" value="1"/>
</dbReference>
<dbReference type="FunFam" id="2.10.220.10:FF:000009">
    <property type="entry name" value="Receptor protein-tyrosine kinase"/>
    <property type="match status" value="1"/>
</dbReference>
<dbReference type="FunFam" id="2.10.220.10:FF:000010">
    <property type="entry name" value="Receptor protein-tyrosine kinase"/>
    <property type="match status" value="1"/>
</dbReference>
<dbReference type="FunFam" id="3.30.200.20:FF:000184">
    <property type="entry name" value="Receptor protein-tyrosine kinase"/>
    <property type="match status" value="1"/>
</dbReference>
<dbReference type="FunFam" id="3.80.20.20:FF:000007">
    <property type="entry name" value="Receptor protein-tyrosine kinase"/>
    <property type="match status" value="1"/>
</dbReference>
<dbReference type="FunFam" id="3.80.20.20:FF:000008">
    <property type="entry name" value="Receptor protein-tyrosine kinase"/>
    <property type="match status" value="1"/>
</dbReference>
<dbReference type="FunFam" id="4.10.1140.10:FF:000001">
    <property type="entry name" value="Receptor protein-tyrosine kinase"/>
    <property type="match status" value="1"/>
</dbReference>
<dbReference type="FunFam" id="1.10.510.10:FF:002828">
    <property type="entry name" value="Receptor tyrosine-protein kinase erbB-2"/>
    <property type="match status" value="1"/>
</dbReference>
<dbReference type="Gene3D" id="1.20.5.100">
    <property type="entry name" value="Cytochrome c1, transmembrane anchor, C-terminal"/>
    <property type="match status" value="1"/>
</dbReference>
<dbReference type="Gene3D" id="2.10.220.10">
    <property type="entry name" value="Hormone Receptor, Insulin-like Growth Factor Receptor 1, Chain A, domain 2"/>
    <property type="match status" value="3"/>
</dbReference>
<dbReference type="Gene3D" id="4.10.1140.10">
    <property type="entry name" value="membrane-bound form of the juxtamembrane domain of the epidermal growth factor receptor like domain"/>
    <property type="match status" value="1"/>
</dbReference>
<dbReference type="Gene3D" id="3.30.200.20">
    <property type="entry name" value="Phosphorylase Kinase, domain 1"/>
    <property type="match status" value="1"/>
</dbReference>
<dbReference type="Gene3D" id="3.80.20.20">
    <property type="entry name" value="Receptor L-domain"/>
    <property type="match status" value="2"/>
</dbReference>
<dbReference type="Gene3D" id="1.10.510.10">
    <property type="entry name" value="Transferase(Phosphotransferase) domain 1"/>
    <property type="match status" value="1"/>
</dbReference>
<dbReference type="InterPro" id="IPR006211">
    <property type="entry name" value="Furin-like_Cys-rich_dom"/>
</dbReference>
<dbReference type="InterPro" id="IPR006212">
    <property type="entry name" value="Furin_repeat"/>
</dbReference>
<dbReference type="InterPro" id="IPR032778">
    <property type="entry name" value="GF_recep_IV"/>
</dbReference>
<dbReference type="InterPro" id="IPR009030">
    <property type="entry name" value="Growth_fac_rcpt_cys_sf"/>
</dbReference>
<dbReference type="InterPro" id="IPR011009">
    <property type="entry name" value="Kinase-like_dom_sf"/>
</dbReference>
<dbReference type="InterPro" id="IPR000719">
    <property type="entry name" value="Prot_kinase_dom"/>
</dbReference>
<dbReference type="InterPro" id="IPR017441">
    <property type="entry name" value="Protein_kinase_ATP_BS"/>
</dbReference>
<dbReference type="InterPro" id="IPR000494">
    <property type="entry name" value="Rcpt_L-dom"/>
</dbReference>
<dbReference type="InterPro" id="IPR036941">
    <property type="entry name" value="Rcpt_L-dom_sf"/>
</dbReference>
<dbReference type="InterPro" id="IPR050122">
    <property type="entry name" value="RTK"/>
</dbReference>
<dbReference type="InterPro" id="IPR001245">
    <property type="entry name" value="Ser-Thr/Tyr_kinase_cat_dom"/>
</dbReference>
<dbReference type="InterPro" id="IPR049328">
    <property type="entry name" value="TM_ErbB1"/>
</dbReference>
<dbReference type="InterPro" id="IPR008266">
    <property type="entry name" value="Tyr_kinase_AS"/>
</dbReference>
<dbReference type="InterPro" id="IPR020635">
    <property type="entry name" value="Tyr_kinase_cat_dom"/>
</dbReference>
<dbReference type="InterPro" id="IPR016245">
    <property type="entry name" value="Tyr_kinase_EGF/ERB/XmrK_rcpt"/>
</dbReference>
<dbReference type="PANTHER" id="PTHR24416:SF137">
    <property type="entry name" value="RECEPTOR TYROSINE-PROTEIN KINASE ERBB-2"/>
    <property type="match status" value="1"/>
</dbReference>
<dbReference type="PANTHER" id="PTHR24416">
    <property type="entry name" value="TYROSINE-PROTEIN KINASE RECEPTOR"/>
    <property type="match status" value="1"/>
</dbReference>
<dbReference type="Pfam" id="PF00757">
    <property type="entry name" value="Furin-like"/>
    <property type="match status" value="1"/>
</dbReference>
<dbReference type="Pfam" id="PF14843">
    <property type="entry name" value="GF_recep_IV"/>
    <property type="match status" value="1"/>
</dbReference>
<dbReference type="Pfam" id="PF07714">
    <property type="entry name" value="PK_Tyr_Ser-Thr"/>
    <property type="match status" value="1"/>
</dbReference>
<dbReference type="Pfam" id="PF01030">
    <property type="entry name" value="Recep_L_domain"/>
    <property type="match status" value="2"/>
</dbReference>
<dbReference type="Pfam" id="PF21314">
    <property type="entry name" value="TM_ErbB1"/>
    <property type="match status" value="1"/>
</dbReference>
<dbReference type="PIRSF" id="PIRSF000619">
    <property type="entry name" value="TyrPK_EGF-R"/>
    <property type="match status" value="1"/>
</dbReference>
<dbReference type="PRINTS" id="PR00109">
    <property type="entry name" value="TYRKINASE"/>
</dbReference>
<dbReference type="SMART" id="SM00261">
    <property type="entry name" value="FU"/>
    <property type="match status" value="4"/>
</dbReference>
<dbReference type="SMART" id="SM00219">
    <property type="entry name" value="TyrKc"/>
    <property type="match status" value="1"/>
</dbReference>
<dbReference type="SUPFAM" id="SSF57184">
    <property type="entry name" value="Growth factor receptor domain"/>
    <property type="match status" value="2"/>
</dbReference>
<dbReference type="SUPFAM" id="SSF52058">
    <property type="entry name" value="L domain-like"/>
    <property type="match status" value="2"/>
</dbReference>
<dbReference type="SUPFAM" id="SSF56112">
    <property type="entry name" value="Protein kinase-like (PK-like)"/>
    <property type="match status" value="1"/>
</dbReference>
<dbReference type="PROSITE" id="PS00107">
    <property type="entry name" value="PROTEIN_KINASE_ATP"/>
    <property type="match status" value="1"/>
</dbReference>
<dbReference type="PROSITE" id="PS50011">
    <property type="entry name" value="PROTEIN_KINASE_DOM"/>
    <property type="match status" value="1"/>
</dbReference>
<dbReference type="PROSITE" id="PS00109">
    <property type="entry name" value="PROTEIN_KINASE_TYR"/>
    <property type="match status" value="1"/>
</dbReference>
<reference key="1">
    <citation type="journal article" date="1994" name="Gene">
        <title>Cloning and activation of the Syrian hamster neu proto-oncogene.</title>
        <authorList>
            <person name="Nakamura T."/>
            <person name="Ushijima T."/>
            <person name="Ishizaka Y."/>
            <person name="Nagao M."/>
            <person name="Arai M."/>
            <person name="Yamazaki Y."/>
            <person name="Ishikawa T."/>
        </authorList>
    </citation>
    <scope>NUCLEOTIDE SEQUENCE [MRNA]</scope>
    <scope>VARIANTS ONCOGENIC GLU-658 AND GLU-659</scope>
    <source>
        <tissue>Nerve</tissue>
    </source>
</reference>
<sequence length="1254" mass="138253">MELAAWCGWGLLLALLSPGASGTQVCTGTDMKLRLPASPETHLDIVRHLYQGCQVVQGNLELTYLPANATLSFLQDIQEVQGYMLIAHSQVRHVPLQRLRIVRGTQLFEDKYALAVLDNRDPLDNVTTATGRTPEGLRELQLRSLTEILKGGVLIRGNPQLCYQDTVLWKDVFRKNNQLAPVDIDTNRSRACPPCAPACKDNHCWGASPEDCQTLTGTIAPRAVPAARARLPTDCCHEQCAAGCTGPKHSDCLACLHFNHSGICELHCPALVTYNTDTFESMPNPEGRYTFGASCVTTCPYNYLSTEVGSCTLVCPLNNQEVTAEDGTQRCEKCSKSCARVCYGLGMEHLRGARAITSANIQEFAGCKKIFGSLAFLPESFDGNPSSGIAPLTPEQLQVFETLEEITGYLYISAWPDSLHDLSVFQNLRVIRGRVLHDGAYSLALQGLGIRWLGLRSLRELGSGLVLIHRNTHLCFVHTVPWDQLFRNPHQALLHSGNPSEEECGLKDFACYPLCAHGHCWGPGPTQCVNCSHFLRGQECVKECRVWKGLPREYVNGKHCLPCHPECQPQNSTETCTGSEADQCTACPHYKDSPFCVARCPSGVKPDLSYMPIWKYPDEEGMCQPCPINCTHSCVDLDERGCPAEQRASPATSIIATVVGILLFLVIGVVVGILIKRRRQKIRKYTMRRLLQETELVEPLTPSGAMPNQAQMRILKETELRKVKVLGSGAFGTVYKGIWIPDGENVKIPVAIKVLRENTSPKANKEILDEAYVMAGLGSPYVSRLLGICLTSTVQLVTQLMPYGCLLDHVREHRGRLGSQDLLNWCVQIAKGMSYLEDVRLVHRDLAARNVLVKSPNHVKITDFGLARLLDIDETEYHADGGKVPIKWIALESILRRRFTHQSDVWSYGVTVWELMTFGAKPYDGIPAREIPDLLEKGERLPQPPICTIDVYMIMVKCWMIDSECRPRFRELVSEFSRMARDPQRFVVIQNEDLGPSSPLDSTFYRSLLEDDDMGDLVDAEEYLVPQQGFFFPDPAPGAGSTAHRRHRSSSTRSGGGELTLGMEPSGEEPPRSPLAPSEGAGSDVFEGELGMGATKGPQSISPRDLSPLQRYSEDPTLPLPTETDGYVAPLACSPQPEYVNQPEVRPQPPLTPEGPLPPVRPAGATLERPKTLSPGKNGVVKDVFTFGGAVENPEYLVPRGGSASQPHPPALCPAFDNLYYWDQDPSERGSPPNTFEGTPTAENPEYLGLDVPV</sequence>